<name>TABB_PSEAJ</name>
<accession>P31852</accession>
<evidence type="ECO:0000250" key="1"/>
<evidence type="ECO:0000305" key="2"/>
<reference key="1">
    <citation type="submission" date="1996-12" db="EMBL/GenBank/DDBJ databases">
        <authorList>
            <person name="Engst K."/>
            <person name="Liu L."/>
            <person name="Shaw P.D."/>
        </authorList>
    </citation>
    <scope>NUCLEOTIDE SEQUENCE [GENOMIC DNA]</scope>
    <source>
        <strain>BR2</strain>
    </source>
</reference>
<reference key="2">
    <citation type="journal article" date="1992" name="Mol. Plant Microbe Interact.">
        <title>Identification of a lysA-like gene required for tabtoxin biosynthesis and pathogenicity in Pseudomonas syringae pv. tabaci strain PTBR2.024.</title>
        <authorList>
            <person name="Engst K."/>
            <person name="Shaw P.D."/>
        </authorList>
    </citation>
    <scope>NUCLEOTIDE SEQUENCE [GENOMIC DNA] OF 1-169</scope>
    <source>
        <strain>PTBR2.024</strain>
    </source>
</reference>
<protein>
    <recommendedName>
        <fullName>Protein TabB</fullName>
    </recommendedName>
</protein>
<sequence length="276" mass="29326">MSNRALIEEAFERRTQLTTEELSALVPPIETGLAALERGELRAARAQEGQWVCDTFVKKLILLSFLTRENTVGETNPGRPKSYDKLPLKFEQWDDAAFRDACIRVVPGAVVRAGAYIAPGAVLMPCFINIGAYVGEGTMIDTWSTVGSCAQVGSRCHISGGVGLGGVLEPIGDNPVVIEDNVFIGARSEVAEGVIVRSGAVIGMGVYLGASTPIIDRASGEVRFGEVPANAVVIAGNRADPKLPGVSLACAVIVKYVDERTRSKTALNDLVRALSR</sequence>
<comment type="cofactor">
    <cofactor evidence="1">
        <name>pyridoxal 5'-phosphate</name>
        <dbReference type="ChEBI" id="CHEBI:597326"/>
    </cofactor>
</comment>
<comment type="similarity">
    <text evidence="2">Belongs to the transferase hexapeptide repeat family.</text>
</comment>
<gene>
    <name type="primary">tabB</name>
</gene>
<organism>
    <name type="scientific">Pseudomonas amygdali pv. tabaci</name>
    <name type="common">Pseudomonas syringae pv. tabaci</name>
    <dbReference type="NCBI Taxonomy" id="322"/>
    <lineage>
        <taxon>Bacteria</taxon>
        <taxon>Pseudomonadati</taxon>
        <taxon>Pseudomonadota</taxon>
        <taxon>Gammaproteobacteria</taxon>
        <taxon>Pseudomonadales</taxon>
        <taxon>Pseudomonadaceae</taxon>
        <taxon>Pseudomonas</taxon>
        <taxon>Pseudomonas amygdali</taxon>
    </lineage>
</organism>
<proteinExistence type="inferred from homology"/>
<feature type="chain" id="PRO_0000068732" description="Protein TabB">
    <location>
        <begin position="1"/>
        <end position="276"/>
    </location>
</feature>
<keyword id="KW-0663">Pyridoxal phosphate</keyword>
<dbReference type="EMBL" id="M88485">
    <property type="protein sequence ID" value="AAB41803.1"/>
    <property type="molecule type" value="Genomic_DNA"/>
</dbReference>
<dbReference type="RefSeq" id="WP_005771897.1">
    <property type="nucleotide sequence ID" value="NZ_QPDY01000007.1"/>
</dbReference>
<dbReference type="SMR" id="P31852"/>
<dbReference type="KEGG" id="ag:AAB41803"/>
<dbReference type="BRENDA" id="2.3.1.117">
    <property type="organism ID" value="12951"/>
</dbReference>
<dbReference type="CDD" id="cd03350">
    <property type="entry name" value="LbH_THP_succinylT"/>
    <property type="match status" value="1"/>
</dbReference>
<dbReference type="Gene3D" id="2.160.10.10">
    <property type="entry name" value="Hexapeptide repeat proteins"/>
    <property type="match status" value="1"/>
</dbReference>
<dbReference type="Gene3D" id="1.10.166.10">
    <property type="entry name" value="Tetrahydrodipicolinate-N-succinyltransferase, N-terminal domain"/>
    <property type="match status" value="1"/>
</dbReference>
<dbReference type="InterPro" id="IPR001451">
    <property type="entry name" value="Hexapep"/>
</dbReference>
<dbReference type="InterPro" id="IPR023180">
    <property type="entry name" value="THP_succinylTrfase_dom1"/>
</dbReference>
<dbReference type="InterPro" id="IPR037133">
    <property type="entry name" value="THP_succinylTrfase_N_sf"/>
</dbReference>
<dbReference type="InterPro" id="IPR050179">
    <property type="entry name" value="Trans_hexapeptide_repeat"/>
</dbReference>
<dbReference type="InterPro" id="IPR011004">
    <property type="entry name" value="Trimer_LpxA-like_sf"/>
</dbReference>
<dbReference type="NCBIfam" id="NF008808">
    <property type="entry name" value="PRK11830.1"/>
    <property type="match status" value="1"/>
</dbReference>
<dbReference type="PANTHER" id="PTHR43300:SF10">
    <property type="entry name" value="2,3,4,5-TETRAHYDROPYRIDINE-2,6-DICARBOXYLATE N-ACETYLTRANSFERASE"/>
    <property type="match status" value="1"/>
</dbReference>
<dbReference type="PANTHER" id="PTHR43300">
    <property type="entry name" value="ACETYLTRANSFERASE"/>
    <property type="match status" value="1"/>
</dbReference>
<dbReference type="Pfam" id="PF14602">
    <property type="entry name" value="Hexapep_2"/>
    <property type="match status" value="1"/>
</dbReference>
<dbReference type="Pfam" id="PF14805">
    <property type="entry name" value="THDPS_N_2"/>
    <property type="match status" value="1"/>
</dbReference>
<dbReference type="SUPFAM" id="SSF51161">
    <property type="entry name" value="Trimeric LpxA-like enzymes"/>
    <property type="match status" value="1"/>
</dbReference>